<accession>C6DHR3</accession>
<protein>
    <recommendedName>
        <fullName evidence="1">Large ribosomal subunit protein uL10</fullName>
    </recommendedName>
    <alternativeName>
        <fullName evidence="2">50S ribosomal protein L10</fullName>
    </alternativeName>
</protein>
<keyword id="KW-0687">Ribonucleoprotein</keyword>
<keyword id="KW-0689">Ribosomal protein</keyword>
<keyword id="KW-0694">RNA-binding</keyword>
<keyword id="KW-0699">rRNA-binding</keyword>
<reference key="1">
    <citation type="submission" date="2009-07" db="EMBL/GenBank/DDBJ databases">
        <title>Complete sequence of Pectobacterium carotovorum subsp. carotovorum PC1.</title>
        <authorList>
            <consortium name="US DOE Joint Genome Institute"/>
            <person name="Lucas S."/>
            <person name="Copeland A."/>
            <person name="Lapidus A."/>
            <person name="Glavina del Rio T."/>
            <person name="Tice H."/>
            <person name="Bruce D."/>
            <person name="Goodwin L."/>
            <person name="Pitluck S."/>
            <person name="Munk A.C."/>
            <person name="Brettin T."/>
            <person name="Detter J.C."/>
            <person name="Han C."/>
            <person name="Tapia R."/>
            <person name="Larimer F."/>
            <person name="Land M."/>
            <person name="Hauser L."/>
            <person name="Kyrpides N."/>
            <person name="Mikhailova N."/>
            <person name="Balakrishnan V."/>
            <person name="Glasner J."/>
            <person name="Perna N.T."/>
        </authorList>
    </citation>
    <scope>NUCLEOTIDE SEQUENCE [LARGE SCALE GENOMIC DNA]</scope>
    <source>
        <strain>PC1</strain>
    </source>
</reference>
<feature type="chain" id="PRO_1000205448" description="Large ribosomal subunit protein uL10">
    <location>
        <begin position="1"/>
        <end position="165"/>
    </location>
</feature>
<sequence length="165" mass="17785">MALNLQDKQAIVAEVSEVAKGALSAVVADSRGVTVDKMTELRKAGREAGVYMRVVRNTLLRRVVEGTQFECLKDTFVGPTLIAYSMEHPGAAARLFKEFAKANAKFEVKAAAFEGELIPAAQIDRLATLPTYEEALARLMSTMKEAAAGKLVRTLAAVRDAKEAA</sequence>
<dbReference type="EMBL" id="CP001657">
    <property type="protein sequence ID" value="ACT11263.1"/>
    <property type="molecule type" value="Genomic_DNA"/>
</dbReference>
<dbReference type="RefSeq" id="WP_012772934.1">
    <property type="nucleotide sequence ID" value="NC_012917.1"/>
</dbReference>
<dbReference type="STRING" id="561230.PC1_0203"/>
<dbReference type="GeneID" id="93388291"/>
<dbReference type="KEGG" id="pct:PC1_0203"/>
<dbReference type="eggNOG" id="COG0244">
    <property type="taxonomic scope" value="Bacteria"/>
</dbReference>
<dbReference type="HOGENOM" id="CLU_092227_0_2_6"/>
<dbReference type="OrthoDB" id="9808307at2"/>
<dbReference type="Proteomes" id="UP000002736">
    <property type="component" value="Chromosome"/>
</dbReference>
<dbReference type="GO" id="GO:0015934">
    <property type="term" value="C:large ribosomal subunit"/>
    <property type="evidence" value="ECO:0007669"/>
    <property type="project" value="InterPro"/>
</dbReference>
<dbReference type="GO" id="GO:0070180">
    <property type="term" value="F:large ribosomal subunit rRNA binding"/>
    <property type="evidence" value="ECO:0007669"/>
    <property type="project" value="UniProtKB-UniRule"/>
</dbReference>
<dbReference type="GO" id="GO:0003735">
    <property type="term" value="F:structural constituent of ribosome"/>
    <property type="evidence" value="ECO:0007669"/>
    <property type="project" value="InterPro"/>
</dbReference>
<dbReference type="GO" id="GO:0006412">
    <property type="term" value="P:translation"/>
    <property type="evidence" value="ECO:0007669"/>
    <property type="project" value="UniProtKB-UniRule"/>
</dbReference>
<dbReference type="CDD" id="cd05797">
    <property type="entry name" value="Ribosomal_L10"/>
    <property type="match status" value="1"/>
</dbReference>
<dbReference type="FunFam" id="3.30.70.1730:FF:000001">
    <property type="entry name" value="50S ribosomal protein L10"/>
    <property type="match status" value="1"/>
</dbReference>
<dbReference type="Gene3D" id="3.30.70.1730">
    <property type="match status" value="1"/>
</dbReference>
<dbReference type="Gene3D" id="6.10.250.2350">
    <property type="match status" value="1"/>
</dbReference>
<dbReference type="HAMAP" id="MF_00362">
    <property type="entry name" value="Ribosomal_uL10"/>
    <property type="match status" value="1"/>
</dbReference>
<dbReference type="InterPro" id="IPR001790">
    <property type="entry name" value="Ribosomal_uL10"/>
</dbReference>
<dbReference type="InterPro" id="IPR043141">
    <property type="entry name" value="Ribosomal_uL10-like_sf"/>
</dbReference>
<dbReference type="InterPro" id="IPR022973">
    <property type="entry name" value="Ribosomal_uL10_bac"/>
</dbReference>
<dbReference type="InterPro" id="IPR047865">
    <property type="entry name" value="Ribosomal_uL10_bac_type"/>
</dbReference>
<dbReference type="InterPro" id="IPR002363">
    <property type="entry name" value="Ribosomal_uL10_CS_bac"/>
</dbReference>
<dbReference type="NCBIfam" id="NF000955">
    <property type="entry name" value="PRK00099.1-1"/>
    <property type="match status" value="1"/>
</dbReference>
<dbReference type="PANTHER" id="PTHR11560">
    <property type="entry name" value="39S RIBOSOMAL PROTEIN L10, MITOCHONDRIAL"/>
    <property type="match status" value="1"/>
</dbReference>
<dbReference type="Pfam" id="PF00466">
    <property type="entry name" value="Ribosomal_L10"/>
    <property type="match status" value="1"/>
</dbReference>
<dbReference type="SUPFAM" id="SSF160369">
    <property type="entry name" value="Ribosomal protein L10-like"/>
    <property type="match status" value="1"/>
</dbReference>
<dbReference type="PROSITE" id="PS01109">
    <property type="entry name" value="RIBOSOMAL_L10"/>
    <property type="match status" value="1"/>
</dbReference>
<name>RL10_PECCP</name>
<organism>
    <name type="scientific">Pectobacterium carotovorum subsp. carotovorum (strain PC1)</name>
    <dbReference type="NCBI Taxonomy" id="561230"/>
    <lineage>
        <taxon>Bacteria</taxon>
        <taxon>Pseudomonadati</taxon>
        <taxon>Pseudomonadota</taxon>
        <taxon>Gammaproteobacteria</taxon>
        <taxon>Enterobacterales</taxon>
        <taxon>Pectobacteriaceae</taxon>
        <taxon>Pectobacterium</taxon>
    </lineage>
</organism>
<proteinExistence type="inferred from homology"/>
<evidence type="ECO:0000255" key="1">
    <source>
        <dbReference type="HAMAP-Rule" id="MF_00362"/>
    </source>
</evidence>
<evidence type="ECO:0000305" key="2"/>
<comment type="function">
    <text evidence="1">Forms part of the ribosomal stalk, playing a central role in the interaction of the ribosome with GTP-bound translation factors.</text>
</comment>
<comment type="subunit">
    <text evidence="1">Part of the ribosomal stalk of the 50S ribosomal subunit. The N-terminus interacts with L11 and the large rRNA to form the base of the stalk. The C-terminus forms an elongated spine to which L12 dimers bind in a sequential fashion forming a multimeric L10(L12)X complex.</text>
</comment>
<comment type="similarity">
    <text evidence="1">Belongs to the universal ribosomal protein uL10 family.</text>
</comment>
<gene>
    <name evidence="1" type="primary">rplJ</name>
    <name type="ordered locus">PC1_0203</name>
</gene>